<accession>Q9ZMP1</accession>
<organism>
    <name type="scientific">Helicobacter pylori (strain J99 / ATCC 700824)</name>
    <name type="common">Campylobacter pylori J99</name>
    <dbReference type="NCBI Taxonomy" id="85963"/>
    <lineage>
        <taxon>Bacteria</taxon>
        <taxon>Pseudomonadati</taxon>
        <taxon>Campylobacterota</taxon>
        <taxon>Epsilonproteobacteria</taxon>
        <taxon>Campylobacterales</taxon>
        <taxon>Helicobacteraceae</taxon>
        <taxon>Helicobacter</taxon>
    </lineage>
</organism>
<comment type="catalytic activity">
    <reaction evidence="1">
        <text>a menaquinone + succinate = a menaquinol + fumarate</text>
        <dbReference type="Rhea" id="RHEA:27834"/>
        <dbReference type="Rhea" id="RHEA-COMP:9537"/>
        <dbReference type="Rhea" id="RHEA-COMP:9539"/>
        <dbReference type="ChEBI" id="CHEBI:16374"/>
        <dbReference type="ChEBI" id="CHEBI:18151"/>
        <dbReference type="ChEBI" id="CHEBI:29806"/>
        <dbReference type="ChEBI" id="CHEBI:30031"/>
        <dbReference type="EC" id="1.3.5.1"/>
    </reaction>
</comment>
<comment type="cofactor">
    <cofactor evidence="1">
        <name>[2Fe-2S] cluster</name>
        <dbReference type="ChEBI" id="CHEBI:190135"/>
    </cofactor>
    <text evidence="1">Binds 1 [2Fe-2S] cluster.</text>
</comment>
<comment type="cofactor">
    <cofactor evidence="1">
        <name>[3Fe-4S] cluster</name>
        <dbReference type="ChEBI" id="CHEBI:21137"/>
    </cofactor>
    <text evidence="1">Binds 1 [3Fe-4S] cluster.</text>
</comment>
<comment type="cofactor">
    <cofactor evidence="1">
        <name>[4Fe-4S] cluster</name>
        <dbReference type="ChEBI" id="CHEBI:49883"/>
    </cofactor>
    <text evidence="1">Binds 1 [4Fe-4S] cluster.</text>
</comment>
<comment type="subunit">
    <text evidence="1">Part of an enzyme complex containing three subunits: a flavoprotein (frdA), an iron-sulfur protein (frdB), and diheme cytochrome b (frdC).</text>
</comment>
<comment type="similarity">
    <text evidence="4">Belongs to the succinate dehydrogenase/fumarate reductase iron-sulfur protein family.</text>
</comment>
<sequence length="245" mass="27625">MSDNERTIVVRVLKFDPQSAVNKPHFKEYQLKETPSMTLFIALNLIREHQDPDLSFDFVCRAGICGSCAMMVNGRPRLACKTLTSSFENGVITLMPMPSFTLIKDLSVNTGDWFSDMTKRVESWAHSKEEVDITKPEKRVEPDEAQEVFELDRCIECGCCIASCGTKLMRPNFIGAAGMNRAMRFMIDSHDERSDDDFYELVGDDDGVFGCMSLIACHDTCPKELPLQSSIATLRNRMLKVGKSR</sequence>
<reference key="1">
    <citation type="journal article" date="1999" name="Nature">
        <title>Genomic sequence comparison of two unrelated isolates of the human gastric pathogen Helicobacter pylori.</title>
        <authorList>
            <person name="Alm R.A."/>
            <person name="Ling L.-S.L."/>
            <person name="Moir D.T."/>
            <person name="King B.L."/>
            <person name="Brown E.D."/>
            <person name="Doig P.C."/>
            <person name="Smith D.R."/>
            <person name="Noonan B."/>
            <person name="Guild B.C."/>
            <person name="deJonge B.L."/>
            <person name="Carmel G."/>
            <person name="Tummino P.J."/>
            <person name="Caruso A."/>
            <person name="Uria-Nickelsen M."/>
            <person name="Mills D.M."/>
            <person name="Ives C."/>
            <person name="Gibson R."/>
            <person name="Merberg D."/>
            <person name="Mills S.D."/>
            <person name="Jiang Q."/>
            <person name="Taylor D.E."/>
            <person name="Vovis G.F."/>
            <person name="Trust T.J."/>
        </authorList>
    </citation>
    <scope>NUCLEOTIDE SEQUENCE [LARGE SCALE GENOMIC DNA]</scope>
    <source>
        <strain>J99 / ATCC 700824</strain>
    </source>
</reference>
<proteinExistence type="inferred from homology"/>
<gene>
    <name type="primary">frdB</name>
    <name type="ordered locus">jhp_0177</name>
</gene>
<feature type="chain" id="PRO_0000158704" description="Fumarate reductase iron-sulfur subunit">
    <location>
        <begin position="1"/>
        <end position="245"/>
    </location>
</feature>
<feature type="domain" description="2Fe-2S ferredoxin-type" evidence="2">
    <location>
        <begin position="17"/>
        <end position="98"/>
    </location>
</feature>
<feature type="domain" description="4Fe-4S ferredoxin-type" evidence="3">
    <location>
        <begin position="145"/>
        <end position="174"/>
    </location>
</feature>
<feature type="binding site" evidence="1">
    <location>
        <position position="60"/>
    </location>
    <ligand>
        <name>[2Fe-2S] cluster</name>
        <dbReference type="ChEBI" id="CHEBI:190135"/>
    </ligand>
</feature>
<feature type="binding site" evidence="1">
    <location>
        <position position="65"/>
    </location>
    <ligand>
        <name>[2Fe-2S] cluster</name>
        <dbReference type="ChEBI" id="CHEBI:190135"/>
    </ligand>
</feature>
<feature type="binding site" evidence="1">
    <location>
        <position position="68"/>
    </location>
    <ligand>
        <name>[2Fe-2S] cluster</name>
        <dbReference type="ChEBI" id="CHEBI:190135"/>
    </ligand>
</feature>
<feature type="binding site" evidence="1">
    <location>
        <position position="80"/>
    </location>
    <ligand>
        <name>[2Fe-2S] cluster</name>
        <dbReference type="ChEBI" id="CHEBI:190135"/>
    </ligand>
</feature>
<feature type="binding site" evidence="1">
    <location>
        <position position="154"/>
    </location>
    <ligand>
        <name>[4Fe-4S] cluster</name>
        <dbReference type="ChEBI" id="CHEBI:49883"/>
    </ligand>
</feature>
<feature type="binding site" evidence="1">
    <location>
        <position position="157"/>
    </location>
    <ligand>
        <name>[4Fe-4S] cluster</name>
        <dbReference type="ChEBI" id="CHEBI:49883"/>
    </ligand>
</feature>
<feature type="binding site" evidence="1">
    <location>
        <position position="160"/>
    </location>
    <ligand>
        <name>[4Fe-4S] cluster</name>
        <dbReference type="ChEBI" id="CHEBI:49883"/>
    </ligand>
</feature>
<feature type="binding site" evidence="1">
    <location>
        <position position="164"/>
    </location>
    <ligand>
        <name>[3Fe-4S] cluster</name>
        <dbReference type="ChEBI" id="CHEBI:21137"/>
    </ligand>
</feature>
<feature type="binding site" evidence="1">
    <location>
        <position position="211"/>
    </location>
    <ligand>
        <name>[3Fe-4S] cluster</name>
        <dbReference type="ChEBI" id="CHEBI:21137"/>
    </ligand>
</feature>
<feature type="binding site" evidence="1">
    <location>
        <position position="217"/>
    </location>
    <ligand>
        <name>[3Fe-4S] cluster</name>
        <dbReference type="ChEBI" id="CHEBI:21137"/>
    </ligand>
</feature>
<feature type="binding site" evidence="1">
    <location>
        <position position="221"/>
    </location>
    <ligand>
        <name>[4Fe-4S] cluster</name>
        <dbReference type="ChEBI" id="CHEBI:49883"/>
    </ligand>
</feature>
<evidence type="ECO:0000250" key="1">
    <source>
        <dbReference type="UniProtKB" id="P17596"/>
    </source>
</evidence>
<evidence type="ECO:0000255" key="2">
    <source>
        <dbReference type="PROSITE-ProRule" id="PRU00465"/>
    </source>
</evidence>
<evidence type="ECO:0000255" key="3">
    <source>
        <dbReference type="PROSITE-ProRule" id="PRU00711"/>
    </source>
</evidence>
<evidence type="ECO:0000305" key="4"/>
<keyword id="KW-0001">2Fe-2S</keyword>
<keyword id="KW-0003">3Fe-4S</keyword>
<keyword id="KW-0004">4Fe-4S</keyword>
<keyword id="KW-0249">Electron transport</keyword>
<keyword id="KW-0408">Iron</keyword>
<keyword id="KW-0411">Iron-sulfur</keyword>
<keyword id="KW-0479">Metal-binding</keyword>
<keyword id="KW-0560">Oxidoreductase</keyword>
<keyword id="KW-0813">Transport</keyword>
<keyword id="KW-0816">Tricarboxylic acid cycle</keyword>
<protein>
    <recommendedName>
        <fullName>Fumarate reductase iron-sulfur subunit</fullName>
        <ecNumber evidence="1">1.3.5.1</ecNumber>
    </recommendedName>
    <alternativeName>
        <fullName>Quinol-fumarate reductase iron-sulfur subunit</fullName>
        <shortName>QFR iron-sulfur subunit</shortName>
    </alternativeName>
</protein>
<name>FRDB_HELPJ</name>
<dbReference type="EC" id="1.3.5.1" evidence="1"/>
<dbReference type="EMBL" id="AE001439">
    <property type="protein sequence ID" value="AAD05761.1"/>
    <property type="molecule type" value="Genomic_DNA"/>
</dbReference>
<dbReference type="PIR" id="F71963">
    <property type="entry name" value="F71963"/>
</dbReference>
<dbReference type="RefSeq" id="WP_001282415.1">
    <property type="nucleotide sequence ID" value="NC_000921.1"/>
</dbReference>
<dbReference type="SMR" id="Q9ZMP1"/>
<dbReference type="IntAct" id="Q9ZMP1">
    <property type="interactions" value="1"/>
</dbReference>
<dbReference type="KEGG" id="hpj:jhp_0177"/>
<dbReference type="PATRIC" id="fig|85963.30.peg.844"/>
<dbReference type="eggNOG" id="COG0479">
    <property type="taxonomic scope" value="Bacteria"/>
</dbReference>
<dbReference type="Proteomes" id="UP000000804">
    <property type="component" value="Chromosome"/>
</dbReference>
<dbReference type="GO" id="GO:0051537">
    <property type="term" value="F:2 iron, 2 sulfur cluster binding"/>
    <property type="evidence" value="ECO:0007669"/>
    <property type="project" value="UniProtKB-KW"/>
</dbReference>
<dbReference type="GO" id="GO:0051538">
    <property type="term" value="F:3 iron, 4 sulfur cluster binding"/>
    <property type="evidence" value="ECO:0007669"/>
    <property type="project" value="UniProtKB-KW"/>
</dbReference>
<dbReference type="GO" id="GO:0051539">
    <property type="term" value="F:4 iron, 4 sulfur cluster binding"/>
    <property type="evidence" value="ECO:0007669"/>
    <property type="project" value="UniProtKB-KW"/>
</dbReference>
<dbReference type="GO" id="GO:0009055">
    <property type="term" value="F:electron transfer activity"/>
    <property type="evidence" value="ECO:0007669"/>
    <property type="project" value="InterPro"/>
</dbReference>
<dbReference type="GO" id="GO:0046872">
    <property type="term" value="F:metal ion binding"/>
    <property type="evidence" value="ECO:0007669"/>
    <property type="project" value="UniProtKB-KW"/>
</dbReference>
<dbReference type="GO" id="GO:0016491">
    <property type="term" value="F:oxidoreductase activity"/>
    <property type="evidence" value="ECO:0007669"/>
    <property type="project" value="UniProtKB-KW"/>
</dbReference>
<dbReference type="GO" id="GO:0022904">
    <property type="term" value="P:respiratory electron transport chain"/>
    <property type="evidence" value="ECO:0007669"/>
    <property type="project" value="TreeGrafter"/>
</dbReference>
<dbReference type="GO" id="GO:0006099">
    <property type="term" value="P:tricarboxylic acid cycle"/>
    <property type="evidence" value="ECO:0007669"/>
    <property type="project" value="UniProtKB-KW"/>
</dbReference>
<dbReference type="CDD" id="cd00207">
    <property type="entry name" value="fer2"/>
    <property type="match status" value="1"/>
</dbReference>
<dbReference type="FunFam" id="1.10.1060.10:FF:000003">
    <property type="entry name" value="Succinate dehydrogenase iron-sulfur subunit"/>
    <property type="match status" value="1"/>
</dbReference>
<dbReference type="FunFam" id="3.10.20.30:FF:000055">
    <property type="entry name" value="Succinate dehydrogenase iron-sulfur subunit"/>
    <property type="match status" value="1"/>
</dbReference>
<dbReference type="Gene3D" id="3.10.20.30">
    <property type="match status" value="1"/>
</dbReference>
<dbReference type="Gene3D" id="1.10.1060.10">
    <property type="entry name" value="Alpha-helical ferredoxin"/>
    <property type="match status" value="1"/>
</dbReference>
<dbReference type="InterPro" id="IPR036010">
    <property type="entry name" value="2Fe-2S_ferredoxin-like_sf"/>
</dbReference>
<dbReference type="InterPro" id="IPR001041">
    <property type="entry name" value="2Fe-2S_ferredoxin-type"/>
</dbReference>
<dbReference type="InterPro" id="IPR006058">
    <property type="entry name" value="2Fe2S_fd_BS"/>
</dbReference>
<dbReference type="InterPro" id="IPR017896">
    <property type="entry name" value="4Fe4S_Fe-S-bd"/>
</dbReference>
<dbReference type="InterPro" id="IPR017900">
    <property type="entry name" value="4Fe4S_Fe_S_CS"/>
</dbReference>
<dbReference type="InterPro" id="IPR012675">
    <property type="entry name" value="Beta-grasp_dom_sf"/>
</dbReference>
<dbReference type="InterPro" id="IPR009051">
    <property type="entry name" value="Helical_ferredxn"/>
</dbReference>
<dbReference type="InterPro" id="IPR050573">
    <property type="entry name" value="SDH/FRD_Iron-Sulfur"/>
</dbReference>
<dbReference type="InterPro" id="IPR004489">
    <property type="entry name" value="Succ_DH/fum_Rdtase_Fe-S"/>
</dbReference>
<dbReference type="InterPro" id="IPR025192">
    <property type="entry name" value="Succ_DH/fum_Rdtase_N"/>
</dbReference>
<dbReference type="NCBIfam" id="TIGR00384">
    <property type="entry name" value="dhsB"/>
    <property type="match status" value="1"/>
</dbReference>
<dbReference type="NCBIfam" id="NF010071">
    <property type="entry name" value="PRK13552.1"/>
    <property type="match status" value="1"/>
</dbReference>
<dbReference type="PANTHER" id="PTHR11921:SF36">
    <property type="entry name" value="FUMARATE REDUCTASE IRON-SULFUR SUBUNIT"/>
    <property type="match status" value="1"/>
</dbReference>
<dbReference type="PANTHER" id="PTHR11921">
    <property type="entry name" value="SUCCINATE DEHYDROGENASE IRON-SULFUR PROTEIN"/>
    <property type="match status" value="1"/>
</dbReference>
<dbReference type="Pfam" id="PF13085">
    <property type="entry name" value="Fer2_3"/>
    <property type="match status" value="1"/>
</dbReference>
<dbReference type="Pfam" id="PF13183">
    <property type="entry name" value="Fer4_8"/>
    <property type="match status" value="1"/>
</dbReference>
<dbReference type="SUPFAM" id="SSF54292">
    <property type="entry name" value="2Fe-2S ferredoxin-like"/>
    <property type="match status" value="1"/>
</dbReference>
<dbReference type="SUPFAM" id="SSF46548">
    <property type="entry name" value="alpha-helical ferredoxin"/>
    <property type="match status" value="1"/>
</dbReference>
<dbReference type="PROSITE" id="PS00197">
    <property type="entry name" value="2FE2S_FER_1"/>
    <property type="match status" value="1"/>
</dbReference>
<dbReference type="PROSITE" id="PS51085">
    <property type="entry name" value="2FE2S_FER_2"/>
    <property type="match status" value="1"/>
</dbReference>
<dbReference type="PROSITE" id="PS00198">
    <property type="entry name" value="4FE4S_FER_1"/>
    <property type="match status" value="1"/>
</dbReference>
<dbReference type="PROSITE" id="PS51379">
    <property type="entry name" value="4FE4S_FER_2"/>
    <property type="match status" value="1"/>
</dbReference>